<dbReference type="EC" id="2.4.99.28" evidence="2"/>
<dbReference type="EMBL" id="CP000148">
    <property type="protein sequence ID" value="ABB30654.1"/>
    <property type="molecule type" value="Genomic_DNA"/>
</dbReference>
<dbReference type="SMR" id="Q39YM0"/>
<dbReference type="STRING" id="269799.Gmet_0411"/>
<dbReference type="KEGG" id="gme:Gmet_0411"/>
<dbReference type="eggNOG" id="COG0772">
    <property type="taxonomic scope" value="Bacteria"/>
</dbReference>
<dbReference type="HOGENOM" id="CLU_029243_0_1_7"/>
<dbReference type="UniPathway" id="UPA00219"/>
<dbReference type="Proteomes" id="UP000007073">
    <property type="component" value="Chromosome"/>
</dbReference>
<dbReference type="GO" id="GO:0032153">
    <property type="term" value="C:cell division site"/>
    <property type="evidence" value="ECO:0007669"/>
    <property type="project" value="TreeGrafter"/>
</dbReference>
<dbReference type="GO" id="GO:0005886">
    <property type="term" value="C:plasma membrane"/>
    <property type="evidence" value="ECO:0007669"/>
    <property type="project" value="UniProtKB-SubCell"/>
</dbReference>
<dbReference type="GO" id="GO:0015648">
    <property type="term" value="F:lipid-linked peptidoglycan transporter activity"/>
    <property type="evidence" value="ECO:0007669"/>
    <property type="project" value="TreeGrafter"/>
</dbReference>
<dbReference type="GO" id="GO:0008955">
    <property type="term" value="F:peptidoglycan glycosyltransferase activity"/>
    <property type="evidence" value="ECO:0007669"/>
    <property type="project" value="RHEA"/>
</dbReference>
<dbReference type="GO" id="GO:0051301">
    <property type="term" value="P:cell division"/>
    <property type="evidence" value="ECO:0007669"/>
    <property type="project" value="UniProtKB-KW"/>
</dbReference>
<dbReference type="GO" id="GO:0071555">
    <property type="term" value="P:cell wall organization"/>
    <property type="evidence" value="ECO:0007669"/>
    <property type="project" value="UniProtKB-KW"/>
</dbReference>
<dbReference type="GO" id="GO:0009252">
    <property type="term" value="P:peptidoglycan biosynthetic process"/>
    <property type="evidence" value="ECO:0007669"/>
    <property type="project" value="UniProtKB-UniPathway"/>
</dbReference>
<dbReference type="GO" id="GO:0008360">
    <property type="term" value="P:regulation of cell shape"/>
    <property type="evidence" value="ECO:0007669"/>
    <property type="project" value="UniProtKB-KW"/>
</dbReference>
<dbReference type="HAMAP" id="MF_00913">
    <property type="entry name" value="PGT_FtsW_proteobact"/>
    <property type="match status" value="1"/>
</dbReference>
<dbReference type="InterPro" id="IPR018365">
    <property type="entry name" value="Cell_cycle_FtsW-rel_CS"/>
</dbReference>
<dbReference type="InterPro" id="IPR013437">
    <property type="entry name" value="FtsW"/>
</dbReference>
<dbReference type="InterPro" id="IPR001182">
    <property type="entry name" value="FtsW/RodA"/>
</dbReference>
<dbReference type="NCBIfam" id="TIGR02614">
    <property type="entry name" value="ftsW"/>
    <property type="match status" value="1"/>
</dbReference>
<dbReference type="PANTHER" id="PTHR30474">
    <property type="entry name" value="CELL CYCLE PROTEIN"/>
    <property type="match status" value="1"/>
</dbReference>
<dbReference type="PANTHER" id="PTHR30474:SF2">
    <property type="entry name" value="PEPTIDOGLYCAN GLYCOSYLTRANSFERASE FTSW-RELATED"/>
    <property type="match status" value="1"/>
</dbReference>
<dbReference type="Pfam" id="PF01098">
    <property type="entry name" value="FTSW_RODA_SPOVE"/>
    <property type="match status" value="1"/>
</dbReference>
<dbReference type="PROSITE" id="PS00428">
    <property type="entry name" value="FTSW_RODA_SPOVE"/>
    <property type="match status" value="1"/>
</dbReference>
<evidence type="ECO:0000255" key="1"/>
<evidence type="ECO:0000255" key="2">
    <source>
        <dbReference type="HAMAP-Rule" id="MF_00913"/>
    </source>
</evidence>
<accession>Q39YM0</accession>
<sequence>MNLNFKLNLKEIERYDLVILLMAVALTCFGVVMVYSASSVMATKKFHDGFYFLKRQGIYAILGCAAMIVAMRIDYRQWREYAVPILLGCLLLLLLVFIPGIGGAAKGASRWIRFPGFNLQPSELAKIALIMYMAYSLDKKQEKVKFFSTGFAPYMVLLAILLAILLKQHDLGSALTMGGVAILMLFAAGTRPRYILGMVVLTLPFLYFLVMNVDYRRRRILAYLNPWEDPTNTGFQIIQSWLAFGNGGIIGQGLGEGKQKMFFLPEAHTDFILSVVGEELGLIGVIVIAAMFLMLVLRGVRVALMAQDPFGRFLAFGIVTLLGIQAFVNMGVVTGLLPTKGLALPFISYGGSSLIVTLFAVGILLNVSTRMKGTP</sequence>
<gene>
    <name evidence="2" type="primary">ftsW</name>
    <name type="ordered locus">Gmet_0411</name>
</gene>
<keyword id="KW-0131">Cell cycle</keyword>
<keyword id="KW-0132">Cell division</keyword>
<keyword id="KW-0997">Cell inner membrane</keyword>
<keyword id="KW-1003">Cell membrane</keyword>
<keyword id="KW-0133">Cell shape</keyword>
<keyword id="KW-0961">Cell wall biogenesis/degradation</keyword>
<keyword id="KW-0328">Glycosyltransferase</keyword>
<keyword id="KW-0472">Membrane</keyword>
<keyword id="KW-0573">Peptidoglycan synthesis</keyword>
<keyword id="KW-1185">Reference proteome</keyword>
<keyword id="KW-0808">Transferase</keyword>
<keyword id="KW-0812">Transmembrane</keyword>
<keyword id="KW-1133">Transmembrane helix</keyword>
<reference key="1">
    <citation type="journal article" date="2009" name="BMC Microbiol.">
        <title>The genome sequence of Geobacter metallireducens: features of metabolism, physiology and regulation common and dissimilar to Geobacter sulfurreducens.</title>
        <authorList>
            <person name="Aklujkar M."/>
            <person name="Krushkal J."/>
            <person name="DiBartolo G."/>
            <person name="Lapidus A."/>
            <person name="Land M.L."/>
            <person name="Lovley D.R."/>
        </authorList>
    </citation>
    <scope>NUCLEOTIDE SEQUENCE [LARGE SCALE GENOMIC DNA]</scope>
    <source>
        <strain>ATCC 53774 / DSM 7210 / GS-15</strain>
    </source>
</reference>
<protein>
    <recommendedName>
        <fullName evidence="2">Probable peptidoglycan glycosyltransferase FtsW</fullName>
        <shortName evidence="2">PGT</shortName>
        <ecNumber evidence="2">2.4.99.28</ecNumber>
    </recommendedName>
    <alternativeName>
        <fullName evidence="2">Cell division protein FtsW</fullName>
    </alternativeName>
    <alternativeName>
        <fullName evidence="2">Cell wall polymerase</fullName>
    </alternativeName>
    <alternativeName>
        <fullName evidence="2">Peptidoglycan polymerase</fullName>
        <shortName evidence="2">PG polymerase</shortName>
    </alternativeName>
</protein>
<organism>
    <name type="scientific">Geobacter metallireducens (strain ATCC 53774 / DSM 7210 / GS-15)</name>
    <dbReference type="NCBI Taxonomy" id="269799"/>
    <lineage>
        <taxon>Bacteria</taxon>
        <taxon>Pseudomonadati</taxon>
        <taxon>Thermodesulfobacteriota</taxon>
        <taxon>Desulfuromonadia</taxon>
        <taxon>Geobacterales</taxon>
        <taxon>Geobacteraceae</taxon>
        <taxon>Geobacter</taxon>
    </lineage>
</organism>
<feature type="chain" id="PRO_0000415183" description="Probable peptidoglycan glycosyltransferase FtsW">
    <location>
        <begin position="1"/>
        <end position="375"/>
    </location>
</feature>
<feature type="topological domain" description="Cytoplasmic" evidence="1">
    <location>
        <begin position="1"/>
        <end position="16"/>
    </location>
</feature>
<feature type="transmembrane region" description="Helical" evidence="2">
    <location>
        <begin position="17"/>
        <end position="37"/>
    </location>
</feature>
<feature type="topological domain" description="Periplasmic" evidence="1">
    <location>
        <begin position="38"/>
        <end position="49"/>
    </location>
</feature>
<feature type="transmembrane region" description="Helical" evidence="2">
    <location>
        <begin position="50"/>
        <end position="70"/>
    </location>
</feature>
<feature type="topological domain" description="Cytoplasmic" evidence="1">
    <location>
        <begin position="71"/>
        <end position="81"/>
    </location>
</feature>
<feature type="transmembrane region" description="Helical" evidence="2">
    <location>
        <begin position="82"/>
        <end position="102"/>
    </location>
</feature>
<feature type="topological domain" description="Periplasmic" evidence="1">
    <location>
        <begin position="103"/>
        <end position="145"/>
    </location>
</feature>
<feature type="transmembrane region" description="Helical" evidence="2">
    <location>
        <begin position="146"/>
        <end position="166"/>
    </location>
</feature>
<feature type="topological domain" description="Cytoplasmic" evidence="1">
    <location>
        <begin position="167"/>
        <end position="169"/>
    </location>
</feature>
<feature type="transmembrane region" description="Helical" evidence="2">
    <location>
        <begin position="170"/>
        <end position="190"/>
    </location>
</feature>
<feature type="topological domain" description="Periplasmic" evidence="1">
    <location>
        <begin position="191"/>
        <end position="193"/>
    </location>
</feature>
<feature type="transmembrane region" description="Helical" evidence="2">
    <location>
        <begin position="194"/>
        <end position="214"/>
    </location>
</feature>
<feature type="topological domain" description="Cytoplasmic" evidence="1">
    <location>
        <begin position="215"/>
        <end position="233"/>
    </location>
</feature>
<feature type="transmembrane region" description="Helical" evidence="2">
    <location>
        <begin position="234"/>
        <end position="254"/>
    </location>
</feature>
<feature type="topological domain" description="Periplasmic" evidence="1">
    <location>
        <begin position="255"/>
        <end position="279"/>
    </location>
</feature>
<feature type="transmembrane region" description="Helical" evidence="2">
    <location>
        <begin position="280"/>
        <end position="300"/>
    </location>
</feature>
<feature type="topological domain" description="Cytoplasmic" evidence="1">
    <location>
        <begin position="301"/>
        <end position="312"/>
    </location>
</feature>
<feature type="transmembrane region" description="Helical" evidence="2">
    <location>
        <begin position="313"/>
        <end position="333"/>
    </location>
</feature>
<feature type="topological domain" description="Periplasmic" evidence="1">
    <location>
        <begin position="334"/>
        <end position="343"/>
    </location>
</feature>
<feature type="transmembrane region" description="Helical" evidence="2">
    <location>
        <begin position="344"/>
        <end position="364"/>
    </location>
</feature>
<feature type="topological domain" description="Cytoplasmic" evidence="1">
    <location>
        <begin position="365"/>
        <end position="375"/>
    </location>
</feature>
<comment type="function">
    <text evidence="2">Peptidoglycan polymerase that is essential for cell division.</text>
</comment>
<comment type="catalytic activity">
    <reaction evidence="2">
        <text>[GlcNAc-(1-&gt;4)-Mur2Ac(oyl-L-Ala-gamma-D-Glu-L-Lys-D-Ala-D-Ala)](n)-di-trans,octa-cis-undecaprenyl diphosphate + beta-D-GlcNAc-(1-&gt;4)-Mur2Ac(oyl-L-Ala-gamma-D-Glu-L-Lys-D-Ala-D-Ala)-di-trans,octa-cis-undecaprenyl diphosphate = [GlcNAc-(1-&gt;4)-Mur2Ac(oyl-L-Ala-gamma-D-Glu-L-Lys-D-Ala-D-Ala)](n+1)-di-trans,octa-cis-undecaprenyl diphosphate + di-trans,octa-cis-undecaprenyl diphosphate + H(+)</text>
        <dbReference type="Rhea" id="RHEA:23708"/>
        <dbReference type="Rhea" id="RHEA-COMP:9602"/>
        <dbReference type="Rhea" id="RHEA-COMP:9603"/>
        <dbReference type="ChEBI" id="CHEBI:15378"/>
        <dbReference type="ChEBI" id="CHEBI:58405"/>
        <dbReference type="ChEBI" id="CHEBI:60033"/>
        <dbReference type="ChEBI" id="CHEBI:78435"/>
        <dbReference type="EC" id="2.4.99.28"/>
    </reaction>
</comment>
<comment type="pathway">
    <text evidence="2">Cell wall biogenesis; peptidoglycan biosynthesis.</text>
</comment>
<comment type="subcellular location">
    <subcellularLocation>
        <location evidence="2">Cell inner membrane</location>
        <topology evidence="2">Multi-pass membrane protein</topology>
    </subcellularLocation>
    <text evidence="2">Localizes to the division septum.</text>
</comment>
<comment type="similarity">
    <text evidence="2">Belongs to the SEDS family. FtsW subfamily.</text>
</comment>
<name>FTSW_GEOMG</name>
<proteinExistence type="inferred from homology"/>